<dbReference type="EMBL" id="CP000903">
    <property type="protein sequence ID" value="ABY44956.1"/>
    <property type="molecule type" value="Genomic_DNA"/>
</dbReference>
<dbReference type="RefSeq" id="WP_002014862.1">
    <property type="nucleotide sequence ID" value="NC_010184.1"/>
</dbReference>
<dbReference type="SMR" id="A9VUC2"/>
<dbReference type="KEGG" id="bwe:BcerKBAB4_3787"/>
<dbReference type="eggNOG" id="COG4476">
    <property type="taxonomic scope" value="Bacteria"/>
</dbReference>
<dbReference type="HOGENOM" id="CLU_166693_0_0_9"/>
<dbReference type="Proteomes" id="UP000002154">
    <property type="component" value="Chromosome"/>
</dbReference>
<dbReference type="Gene3D" id="1.10.220.80">
    <property type="entry name" value="BH2638-like"/>
    <property type="match status" value="1"/>
</dbReference>
<dbReference type="HAMAP" id="MF_01041">
    <property type="entry name" value="UPF0223"/>
    <property type="match status" value="1"/>
</dbReference>
<dbReference type="InterPro" id="IPR023324">
    <property type="entry name" value="BH2638-like_sf"/>
</dbReference>
<dbReference type="InterPro" id="IPR007920">
    <property type="entry name" value="UPF0223"/>
</dbReference>
<dbReference type="NCBIfam" id="NF003353">
    <property type="entry name" value="PRK04387.1"/>
    <property type="match status" value="1"/>
</dbReference>
<dbReference type="Pfam" id="PF05256">
    <property type="entry name" value="UPF0223"/>
    <property type="match status" value="1"/>
</dbReference>
<dbReference type="PIRSF" id="PIRSF037260">
    <property type="entry name" value="UPF0223"/>
    <property type="match status" value="1"/>
</dbReference>
<dbReference type="SUPFAM" id="SSF158504">
    <property type="entry name" value="BH2638-like"/>
    <property type="match status" value="1"/>
</dbReference>
<evidence type="ECO:0000255" key="1">
    <source>
        <dbReference type="HAMAP-Rule" id="MF_01041"/>
    </source>
</evidence>
<reference key="1">
    <citation type="journal article" date="2008" name="Chem. Biol. Interact.">
        <title>Extending the Bacillus cereus group genomics to putative food-borne pathogens of different toxicity.</title>
        <authorList>
            <person name="Lapidus A."/>
            <person name="Goltsman E."/>
            <person name="Auger S."/>
            <person name="Galleron N."/>
            <person name="Segurens B."/>
            <person name="Dossat C."/>
            <person name="Land M.L."/>
            <person name="Broussolle V."/>
            <person name="Brillard J."/>
            <person name="Guinebretiere M.-H."/>
            <person name="Sanchis V."/>
            <person name="Nguen-the C."/>
            <person name="Lereclus D."/>
            <person name="Richardson P."/>
            <person name="Wincker P."/>
            <person name="Weissenbach J."/>
            <person name="Ehrlich S.D."/>
            <person name="Sorokin A."/>
        </authorList>
    </citation>
    <scope>NUCLEOTIDE SEQUENCE [LARGE SCALE GENOMIC DNA]</scope>
    <source>
        <strain>KBAB4</strain>
    </source>
</reference>
<organism>
    <name type="scientific">Bacillus mycoides (strain KBAB4)</name>
    <name type="common">Bacillus weihenstephanensis</name>
    <dbReference type="NCBI Taxonomy" id="315730"/>
    <lineage>
        <taxon>Bacteria</taxon>
        <taxon>Bacillati</taxon>
        <taxon>Bacillota</taxon>
        <taxon>Bacilli</taxon>
        <taxon>Bacillales</taxon>
        <taxon>Bacillaceae</taxon>
        <taxon>Bacillus</taxon>
        <taxon>Bacillus cereus group</taxon>
    </lineage>
</organism>
<protein>
    <recommendedName>
        <fullName evidence="1">UPF0223 protein BcerKBAB4_3787</fullName>
    </recommendedName>
</protein>
<sequence>MEYQYPLDYNWSNEEMVAVVKFYEAIEKVYEKGVLREDLMELYRRFKEIVPSKAAEKKIDKEFQEVSGYSIYRTIQRAKEVAEKKIVKM</sequence>
<accession>A9VUC2</accession>
<gene>
    <name type="ordered locus">BcerKBAB4_3787</name>
</gene>
<feature type="chain" id="PRO_1000136027" description="UPF0223 protein BcerKBAB4_3787">
    <location>
        <begin position="1"/>
        <end position="89"/>
    </location>
</feature>
<name>Y3787_BACMK</name>
<comment type="similarity">
    <text evidence="1">Belongs to the UPF0223 family.</text>
</comment>
<proteinExistence type="inferred from homology"/>